<proteinExistence type="inferred from homology"/>
<dbReference type="EC" id="2.2.1.7" evidence="1"/>
<dbReference type="EMBL" id="CP000393">
    <property type="protein sequence ID" value="ABG52192.1"/>
    <property type="molecule type" value="Genomic_DNA"/>
</dbReference>
<dbReference type="RefSeq" id="WP_011612545.1">
    <property type="nucleotide sequence ID" value="NC_008312.1"/>
</dbReference>
<dbReference type="SMR" id="Q10ZY2"/>
<dbReference type="STRING" id="203124.Tery_3042"/>
<dbReference type="KEGG" id="ter:Tery_3042"/>
<dbReference type="eggNOG" id="COG1154">
    <property type="taxonomic scope" value="Bacteria"/>
</dbReference>
<dbReference type="HOGENOM" id="CLU_009227_1_4_3"/>
<dbReference type="OrthoDB" id="9803371at2"/>
<dbReference type="UniPathway" id="UPA00064">
    <property type="reaction ID" value="UER00091"/>
</dbReference>
<dbReference type="GO" id="GO:0005829">
    <property type="term" value="C:cytosol"/>
    <property type="evidence" value="ECO:0007669"/>
    <property type="project" value="TreeGrafter"/>
</dbReference>
<dbReference type="GO" id="GO:0008661">
    <property type="term" value="F:1-deoxy-D-xylulose-5-phosphate synthase activity"/>
    <property type="evidence" value="ECO:0007669"/>
    <property type="project" value="UniProtKB-UniRule"/>
</dbReference>
<dbReference type="GO" id="GO:0000287">
    <property type="term" value="F:magnesium ion binding"/>
    <property type="evidence" value="ECO:0007669"/>
    <property type="project" value="UniProtKB-UniRule"/>
</dbReference>
<dbReference type="GO" id="GO:0030976">
    <property type="term" value="F:thiamine pyrophosphate binding"/>
    <property type="evidence" value="ECO:0007669"/>
    <property type="project" value="UniProtKB-UniRule"/>
</dbReference>
<dbReference type="GO" id="GO:0052865">
    <property type="term" value="P:1-deoxy-D-xylulose 5-phosphate biosynthetic process"/>
    <property type="evidence" value="ECO:0007669"/>
    <property type="project" value="UniProtKB-UniPathway"/>
</dbReference>
<dbReference type="GO" id="GO:0019288">
    <property type="term" value="P:isopentenyl diphosphate biosynthetic process, methylerythritol 4-phosphate pathway"/>
    <property type="evidence" value="ECO:0007669"/>
    <property type="project" value="TreeGrafter"/>
</dbReference>
<dbReference type="GO" id="GO:0016114">
    <property type="term" value="P:terpenoid biosynthetic process"/>
    <property type="evidence" value="ECO:0007669"/>
    <property type="project" value="UniProtKB-UniRule"/>
</dbReference>
<dbReference type="GO" id="GO:0009228">
    <property type="term" value="P:thiamine biosynthetic process"/>
    <property type="evidence" value="ECO:0007669"/>
    <property type="project" value="UniProtKB-UniRule"/>
</dbReference>
<dbReference type="CDD" id="cd02007">
    <property type="entry name" value="TPP_DXS"/>
    <property type="match status" value="1"/>
</dbReference>
<dbReference type="CDD" id="cd07033">
    <property type="entry name" value="TPP_PYR_DXS_TK_like"/>
    <property type="match status" value="1"/>
</dbReference>
<dbReference type="FunFam" id="3.40.50.920:FF:000002">
    <property type="entry name" value="1-deoxy-D-xylulose-5-phosphate synthase"/>
    <property type="match status" value="1"/>
</dbReference>
<dbReference type="FunFam" id="3.40.50.970:FF:000005">
    <property type="entry name" value="1-deoxy-D-xylulose-5-phosphate synthase"/>
    <property type="match status" value="1"/>
</dbReference>
<dbReference type="Gene3D" id="3.40.50.920">
    <property type="match status" value="1"/>
</dbReference>
<dbReference type="Gene3D" id="3.40.50.970">
    <property type="match status" value="2"/>
</dbReference>
<dbReference type="HAMAP" id="MF_00315">
    <property type="entry name" value="DXP_synth"/>
    <property type="match status" value="1"/>
</dbReference>
<dbReference type="InterPro" id="IPR005477">
    <property type="entry name" value="Dxylulose-5-P_synthase"/>
</dbReference>
<dbReference type="InterPro" id="IPR029061">
    <property type="entry name" value="THDP-binding"/>
</dbReference>
<dbReference type="InterPro" id="IPR009014">
    <property type="entry name" value="Transketo_C/PFOR_II"/>
</dbReference>
<dbReference type="InterPro" id="IPR005475">
    <property type="entry name" value="Transketolase-like_Pyr-bd"/>
</dbReference>
<dbReference type="InterPro" id="IPR020826">
    <property type="entry name" value="Transketolase_BS"/>
</dbReference>
<dbReference type="InterPro" id="IPR033248">
    <property type="entry name" value="Transketolase_C"/>
</dbReference>
<dbReference type="InterPro" id="IPR049557">
    <property type="entry name" value="Transketolase_CS"/>
</dbReference>
<dbReference type="NCBIfam" id="TIGR00204">
    <property type="entry name" value="dxs"/>
    <property type="match status" value="1"/>
</dbReference>
<dbReference type="NCBIfam" id="NF003933">
    <property type="entry name" value="PRK05444.2-2"/>
    <property type="match status" value="1"/>
</dbReference>
<dbReference type="PANTHER" id="PTHR43322">
    <property type="entry name" value="1-D-DEOXYXYLULOSE 5-PHOSPHATE SYNTHASE-RELATED"/>
    <property type="match status" value="1"/>
</dbReference>
<dbReference type="PANTHER" id="PTHR43322:SF5">
    <property type="entry name" value="1-DEOXY-D-XYLULOSE-5-PHOSPHATE SYNTHASE, CHLOROPLASTIC"/>
    <property type="match status" value="1"/>
</dbReference>
<dbReference type="Pfam" id="PF13292">
    <property type="entry name" value="DXP_synthase_N"/>
    <property type="match status" value="1"/>
</dbReference>
<dbReference type="Pfam" id="PF02779">
    <property type="entry name" value="Transket_pyr"/>
    <property type="match status" value="1"/>
</dbReference>
<dbReference type="Pfam" id="PF02780">
    <property type="entry name" value="Transketolase_C"/>
    <property type="match status" value="1"/>
</dbReference>
<dbReference type="SMART" id="SM00861">
    <property type="entry name" value="Transket_pyr"/>
    <property type="match status" value="1"/>
</dbReference>
<dbReference type="SUPFAM" id="SSF52518">
    <property type="entry name" value="Thiamin diphosphate-binding fold (THDP-binding)"/>
    <property type="match status" value="2"/>
</dbReference>
<dbReference type="SUPFAM" id="SSF52922">
    <property type="entry name" value="TK C-terminal domain-like"/>
    <property type="match status" value="1"/>
</dbReference>
<dbReference type="PROSITE" id="PS00801">
    <property type="entry name" value="TRANSKETOLASE_1"/>
    <property type="match status" value="1"/>
</dbReference>
<dbReference type="PROSITE" id="PS00802">
    <property type="entry name" value="TRANSKETOLASE_2"/>
    <property type="match status" value="1"/>
</dbReference>
<evidence type="ECO:0000255" key="1">
    <source>
        <dbReference type="HAMAP-Rule" id="MF_00315"/>
    </source>
</evidence>
<keyword id="KW-0414">Isoprene biosynthesis</keyword>
<keyword id="KW-0460">Magnesium</keyword>
<keyword id="KW-0479">Metal-binding</keyword>
<keyword id="KW-0784">Thiamine biosynthesis</keyword>
<keyword id="KW-0786">Thiamine pyrophosphate</keyword>
<keyword id="KW-0808">Transferase</keyword>
<organism>
    <name type="scientific">Trichodesmium erythraeum (strain IMS101)</name>
    <dbReference type="NCBI Taxonomy" id="203124"/>
    <lineage>
        <taxon>Bacteria</taxon>
        <taxon>Bacillati</taxon>
        <taxon>Cyanobacteriota</taxon>
        <taxon>Cyanophyceae</taxon>
        <taxon>Oscillatoriophycideae</taxon>
        <taxon>Oscillatoriales</taxon>
        <taxon>Microcoleaceae</taxon>
        <taxon>Trichodesmium</taxon>
    </lineage>
</organism>
<accession>Q10ZY2</accession>
<name>DXS_TRIEI</name>
<feature type="chain" id="PRO_1000019089" description="1-deoxy-D-xylulose-5-phosphate synthase">
    <location>
        <begin position="1"/>
        <end position="635"/>
    </location>
</feature>
<feature type="binding site" evidence="1">
    <location>
        <position position="72"/>
    </location>
    <ligand>
        <name>thiamine diphosphate</name>
        <dbReference type="ChEBI" id="CHEBI:58937"/>
    </ligand>
</feature>
<feature type="binding site" evidence="1">
    <location>
        <begin position="113"/>
        <end position="115"/>
    </location>
    <ligand>
        <name>thiamine diphosphate</name>
        <dbReference type="ChEBI" id="CHEBI:58937"/>
    </ligand>
</feature>
<feature type="binding site" evidence="1">
    <location>
        <position position="144"/>
    </location>
    <ligand>
        <name>Mg(2+)</name>
        <dbReference type="ChEBI" id="CHEBI:18420"/>
    </ligand>
</feature>
<feature type="binding site" evidence="1">
    <location>
        <begin position="145"/>
        <end position="146"/>
    </location>
    <ligand>
        <name>thiamine diphosphate</name>
        <dbReference type="ChEBI" id="CHEBI:58937"/>
    </ligand>
</feature>
<feature type="binding site" evidence="1">
    <location>
        <position position="174"/>
    </location>
    <ligand>
        <name>Mg(2+)</name>
        <dbReference type="ChEBI" id="CHEBI:18420"/>
    </ligand>
</feature>
<feature type="binding site" evidence="1">
    <location>
        <position position="174"/>
    </location>
    <ligand>
        <name>thiamine diphosphate</name>
        <dbReference type="ChEBI" id="CHEBI:58937"/>
    </ligand>
</feature>
<feature type="binding site" evidence="1">
    <location>
        <position position="287"/>
    </location>
    <ligand>
        <name>thiamine diphosphate</name>
        <dbReference type="ChEBI" id="CHEBI:58937"/>
    </ligand>
</feature>
<feature type="binding site" evidence="1">
    <location>
        <position position="370"/>
    </location>
    <ligand>
        <name>thiamine diphosphate</name>
        <dbReference type="ChEBI" id="CHEBI:58937"/>
    </ligand>
</feature>
<protein>
    <recommendedName>
        <fullName evidence="1">1-deoxy-D-xylulose-5-phosphate synthase</fullName>
        <ecNumber evidence="1">2.2.1.7</ecNumber>
    </recommendedName>
    <alternativeName>
        <fullName evidence="1">1-deoxyxylulose-5-phosphate synthase</fullName>
        <shortName evidence="1">DXP synthase</shortName>
        <shortName evidence="1">DXPS</shortName>
    </alternativeName>
</protein>
<gene>
    <name evidence="1" type="primary">dxs</name>
    <name type="ordered locus">Tery_3042</name>
</gene>
<comment type="function">
    <text evidence="1">Catalyzes the acyloin condensation reaction between C atoms 2 and 3 of pyruvate and glyceraldehyde 3-phosphate to yield 1-deoxy-D-xylulose-5-phosphate (DXP).</text>
</comment>
<comment type="catalytic activity">
    <reaction evidence="1">
        <text>D-glyceraldehyde 3-phosphate + pyruvate + H(+) = 1-deoxy-D-xylulose 5-phosphate + CO2</text>
        <dbReference type="Rhea" id="RHEA:12605"/>
        <dbReference type="ChEBI" id="CHEBI:15361"/>
        <dbReference type="ChEBI" id="CHEBI:15378"/>
        <dbReference type="ChEBI" id="CHEBI:16526"/>
        <dbReference type="ChEBI" id="CHEBI:57792"/>
        <dbReference type="ChEBI" id="CHEBI:59776"/>
        <dbReference type="EC" id="2.2.1.7"/>
    </reaction>
</comment>
<comment type="cofactor">
    <cofactor evidence="1">
        <name>Mg(2+)</name>
        <dbReference type="ChEBI" id="CHEBI:18420"/>
    </cofactor>
    <text evidence="1">Binds 1 Mg(2+) ion per subunit.</text>
</comment>
<comment type="cofactor">
    <cofactor evidence="1">
        <name>thiamine diphosphate</name>
        <dbReference type="ChEBI" id="CHEBI:58937"/>
    </cofactor>
    <text evidence="1">Binds 1 thiamine pyrophosphate per subunit.</text>
</comment>
<comment type="pathway">
    <text evidence="1">Metabolic intermediate biosynthesis; 1-deoxy-D-xylulose 5-phosphate biosynthesis; 1-deoxy-D-xylulose 5-phosphate from D-glyceraldehyde 3-phosphate and pyruvate: step 1/1.</text>
</comment>
<comment type="subunit">
    <text evidence="1">Homodimer.</text>
</comment>
<comment type="similarity">
    <text evidence="1">Belongs to the transketolase family. DXPS subfamily.</text>
</comment>
<sequence length="635" mass="69002">MHLSEITHPKQLHNLSIHQLEEIARQIREKHLETVATSGGHLGPGLGVVELTLGLYQTLNLDRDKVIWDVGHQAYPHKIITGRYHNFHTLRQKDGIAGYLKRCESKFDHFGAGHASTSISAGLGMALARDMKGDNFKVVSIIGDGALTGGMALEAINHAGHLPKTNILVVLNDNEMSISPNVGAISRYLNKMRLSPPIQFLQDNLEEQFKQIPFVGETFTPEMEGLKGGMKRLAVSKVGAVIEELGFTYMGPVDGHNLEELITTFNQAHQIPGPVLVHVATTKGKGYPVAEEDKVSYHAQNPFNLATGKALPASKPKPPKYSKVFAHTLVKLAENNPKIIGITAAMATGTGLDKLHGKLPKQYIDVGIAEQHAVTLAAGLASEGMRPVVCIYSTFLQRAYDQIIHDVCIQKLPVFFCLDRAGIVGADGPTHQGMYDIAYLRCIPNMVVMAPKDEGELQRMVLTGIKHTDGAIAMRYPRGNGYGVPLMEEGWEAITIGKGEILRNGDDVLILGYGSMVYSAMQTAEILSEHGVAATVVNARFVKPLDTELILPLAQRIGQVVTMEEGCLMGGFGSAVTEALMDNNVLVPVLRLGVPDKLVDHAKPDESKADLGLTPSQMAERILQSFKPRLSTINV</sequence>
<reference key="1">
    <citation type="journal article" date="2015" name="Proc. Natl. Acad. Sci. U.S.A.">
        <title>Trichodesmium genome maintains abundant, widespread noncoding DNA in situ, despite oligotrophic lifestyle.</title>
        <authorList>
            <person name="Walworth N."/>
            <person name="Pfreundt U."/>
            <person name="Nelson W.C."/>
            <person name="Mincer T."/>
            <person name="Heidelberg J.F."/>
            <person name="Fu F."/>
            <person name="Waterbury J.B."/>
            <person name="Glavina del Rio T."/>
            <person name="Goodwin L."/>
            <person name="Kyrpides N.C."/>
            <person name="Land M.L."/>
            <person name="Woyke T."/>
            <person name="Hutchins D.A."/>
            <person name="Hess W.R."/>
            <person name="Webb E.A."/>
        </authorList>
    </citation>
    <scope>NUCLEOTIDE SEQUENCE [LARGE SCALE GENOMIC DNA]</scope>
    <source>
        <strain>IMS101</strain>
    </source>
</reference>